<sequence>MTVIAKIYAREILDSRGNPTLEAEVTLENAVCGRAAVPSGASTGTKEAVELRDGDKTRYLGKGVRAAVDNVNGVIAAALVGFDGADQTGLDHRLINLDGTENKGRLGANALLGVSLATAHAVAAARKQPLWMYLSTLGESKLSLPVPMMNIINGGAHADNNVDFQEFMVLPVGFASFSEALRAGTEIFHALKSVLKGQGLSTAVGDEGGFAPDFRSNVEALDAILEAIGRAGYIAGEDVLLGLDVASSEFRNNGKYNLVGENKRLTSEQFVDFLDDLVAQYPIISIEDGLAEDDWVGWKQLTERIGHKVQLVGDDLFVTNPKVFQEGITSGIANAILIKLNQIGTLTETLESIAMAHRAQYAAIVSHRSGETEDTSIADIAVATTATQIKTGSLCRSDRVAKYNQLLRIEQALGVGARYAGRDAFVSLKS</sequence>
<evidence type="ECO:0000255" key="1">
    <source>
        <dbReference type="HAMAP-Rule" id="MF_00318"/>
    </source>
</evidence>
<dbReference type="EC" id="4.2.1.11" evidence="1"/>
<dbReference type="EMBL" id="AE009442">
    <property type="protein sequence ID" value="AAO28416.1"/>
    <property type="molecule type" value="Genomic_DNA"/>
</dbReference>
<dbReference type="RefSeq" id="WP_004090561.1">
    <property type="nucleotide sequence ID" value="NC_004556.1"/>
</dbReference>
<dbReference type="SMR" id="Q87DY6"/>
<dbReference type="GeneID" id="93904254"/>
<dbReference type="KEGG" id="xft:PD_0543"/>
<dbReference type="HOGENOM" id="CLU_031223_2_1_6"/>
<dbReference type="UniPathway" id="UPA00109">
    <property type="reaction ID" value="UER00187"/>
</dbReference>
<dbReference type="Proteomes" id="UP000002516">
    <property type="component" value="Chromosome"/>
</dbReference>
<dbReference type="GO" id="GO:0009986">
    <property type="term" value="C:cell surface"/>
    <property type="evidence" value="ECO:0007669"/>
    <property type="project" value="UniProtKB-SubCell"/>
</dbReference>
<dbReference type="GO" id="GO:0005576">
    <property type="term" value="C:extracellular region"/>
    <property type="evidence" value="ECO:0007669"/>
    <property type="project" value="UniProtKB-SubCell"/>
</dbReference>
<dbReference type="GO" id="GO:0000015">
    <property type="term" value="C:phosphopyruvate hydratase complex"/>
    <property type="evidence" value="ECO:0007669"/>
    <property type="project" value="InterPro"/>
</dbReference>
<dbReference type="GO" id="GO:0000287">
    <property type="term" value="F:magnesium ion binding"/>
    <property type="evidence" value="ECO:0007669"/>
    <property type="project" value="UniProtKB-UniRule"/>
</dbReference>
<dbReference type="GO" id="GO:0004634">
    <property type="term" value="F:phosphopyruvate hydratase activity"/>
    <property type="evidence" value="ECO:0007669"/>
    <property type="project" value="UniProtKB-UniRule"/>
</dbReference>
<dbReference type="GO" id="GO:0006096">
    <property type="term" value="P:glycolytic process"/>
    <property type="evidence" value="ECO:0007669"/>
    <property type="project" value="UniProtKB-UniRule"/>
</dbReference>
<dbReference type="CDD" id="cd03313">
    <property type="entry name" value="enolase"/>
    <property type="match status" value="1"/>
</dbReference>
<dbReference type="FunFam" id="3.20.20.120:FF:000001">
    <property type="entry name" value="Enolase"/>
    <property type="match status" value="1"/>
</dbReference>
<dbReference type="FunFam" id="3.30.390.10:FF:000001">
    <property type="entry name" value="Enolase"/>
    <property type="match status" value="1"/>
</dbReference>
<dbReference type="Gene3D" id="3.20.20.120">
    <property type="entry name" value="Enolase-like C-terminal domain"/>
    <property type="match status" value="1"/>
</dbReference>
<dbReference type="Gene3D" id="3.30.390.10">
    <property type="entry name" value="Enolase-like, N-terminal domain"/>
    <property type="match status" value="1"/>
</dbReference>
<dbReference type="HAMAP" id="MF_00318">
    <property type="entry name" value="Enolase"/>
    <property type="match status" value="1"/>
</dbReference>
<dbReference type="InterPro" id="IPR000941">
    <property type="entry name" value="Enolase"/>
</dbReference>
<dbReference type="InterPro" id="IPR036849">
    <property type="entry name" value="Enolase-like_C_sf"/>
</dbReference>
<dbReference type="InterPro" id="IPR029017">
    <property type="entry name" value="Enolase-like_N"/>
</dbReference>
<dbReference type="InterPro" id="IPR020810">
    <property type="entry name" value="Enolase_C"/>
</dbReference>
<dbReference type="InterPro" id="IPR020809">
    <property type="entry name" value="Enolase_CS"/>
</dbReference>
<dbReference type="InterPro" id="IPR020811">
    <property type="entry name" value="Enolase_N"/>
</dbReference>
<dbReference type="NCBIfam" id="TIGR01060">
    <property type="entry name" value="eno"/>
    <property type="match status" value="1"/>
</dbReference>
<dbReference type="PANTHER" id="PTHR11902">
    <property type="entry name" value="ENOLASE"/>
    <property type="match status" value="1"/>
</dbReference>
<dbReference type="PANTHER" id="PTHR11902:SF1">
    <property type="entry name" value="ENOLASE"/>
    <property type="match status" value="1"/>
</dbReference>
<dbReference type="Pfam" id="PF00113">
    <property type="entry name" value="Enolase_C"/>
    <property type="match status" value="1"/>
</dbReference>
<dbReference type="Pfam" id="PF03952">
    <property type="entry name" value="Enolase_N"/>
    <property type="match status" value="1"/>
</dbReference>
<dbReference type="PIRSF" id="PIRSF001400">
    <property type="entry name" value="Enolase"/>
    <property type="match status" value="1"/>
</dbReference>
<dbReference type="PRINTS" id="PR00148">
    <property type="entry name" value="ENOLASE"/>
</dbReference>
<dbReference type="SFLD" id="SFLDF00002">
    <property type="entry name" value="enolase"/>
    <property type="match status" value="1"/>
</dbReference>
<dbReference type="SFLD" id="SFLDG00178">
    <property type="entry name" value="enolase"/>
    <property type="match status" value="1"/>
</dbReference>
<dbReference type="SMART" id="SM01192">
    <property type="entry name" value="Enolase_C"/>
    <property type="match status" value="1"/>
</dbReference>
<dbReference type="SMART" id="SM01193">
    <property type="entry name" value="Enolase_N"/>
    <property type="match status" value="1"/>
</dbReference>
<dbReference type="SUPFAM" id="SSF51604">
    <property type="entry name" value="Enolase C-terminal domain-like"/>
    <property type="match status" value="1"/>
</dbReference>
<dbReference type="SUPFAM" id="SSF54826">
    <property type="entry name" value="Enolase N-terminal domain-like"/>
    <property type="match status" value="1"/>
</dbReference>
<dbReference type="PROSITE" id="PS00164">
    <property type="entry name" value="ENOLASE"/>
    <property type="match status" value="1"/>
</dbReference>
<accession>Q87DY6</accession>
<keyword id="KW-0963">Cytoplasm</keyword>
<keyword id="KW-0324">Glycolysis</keyword>
<keyword id="KW-0456">Lyase</keyword>
<keyword id="KW-0460">Magnesium</keyword>
<keyword id="KW-0479">Metal-binding</keyword>
<keyword id="KW-1185">Reference proteome</keyword>
<keyword id="KW-0964">Secreted</keyword>
<feature type="chain" id="PRO_0000134015" description="Enolase">
    <location>
        <begin position="1"/>
        <end position="430"/>
    </location>
</feature>
<feature type="active site" description="Proton donor" evidence="1">
    <location>
        <position position="207"/>
    </location>
</feature>
<feature type="active site" description="Proton acceptor" evidence="1">
    <location>
        <position position="339"/>
    </location>
</feature>
<feature type="binding site" evidence="1">
    <location>
        <position position="165"/>
    </location>
    <ligand>
        <name>(2R)-2-phosphoglycerate</name>
        <dbReference type="ChEBI" id="CHEBI:58289"/>
    </ligand>
</feature>
<feature type="binding site" evidence="1">
    <location>
        <position position="244"/>
    </location>
    <ligand>
        <name>Mg(2+)</name>
        <dbReference type="ChEBI" id="CHEBI:18420"/>
    </ligand>
</feature>
<feature type="binding site" evidence="1">
    <location>
        <position position="287"/>
    </location>
    <ligand>
        <name>Mg(2+)</name>
        <dbReference type="ChEBI" id="CHEBI:18420"/>
    </ligand>
</feature>
<feature type="binding site" evidence="1">
    <location>
        <position position="314"/>
    </location>
    <ligand>
        <name>Mg(2+)</name>
        <dbReference type="ChEBI" id="CHEBI:18420"/>
    </ligand>
</feature>
<feature type="binding site" evidence="1">
    <location>
        <position position="339"/>
    </location>
    <ligand>
        <name>(2R)-2-phosphoglycerate</name>
        <dbReference type="ChEBI" id="CHEBI:58289"/>
    </ligand>
</feature>
<feature type="binding site" evidence="1">
    <location>
        <position position="368"/>
    </location>
    <ligand>
        <name>(2R)-2-phosphoglycerate</name>
        <dbReference type="ChEBI" id="CHEBI:58289"/>
    </ligand>
</feature>
<feature type="binding site" evidence="1">
    <location>
        <position position="369"/>
    </location>
    <ligand>
        <name>(2R)-2-phosphoglycerate</name>
        <dbReference type="ChEBI" id="CHEBI:58289"/>
    </ligand>
</feature>
<feature type="binding site" evidence="1">
    <location>
        <position position="390"/>
    </location>
    <ligand>
        <name>(2R)-2-phosphoglycerate</name>
        <dbReference type="ChEBI" id="CHEBI:58289"/>
    </ligand>
</feature>
<organism>
    <name type="scientific">Xylella fastidiosa (strain Temecula1 / ATCC 700964)</name>
    <dbReference type="NCBI Taxonomy" id="183190"/>
    <lineage>
        <taxon>Bacteria</taxon>
        <taxon>Pseudomonadati</taxon>
        <taxon>Pseudomonadota</taxon>
        <taxon>Gammaproteobacteria</taxon>
        <taxon>Lysobacterales</taxon>
        <taxon>Lysobacteraceae</taxon>
        <taxon>Xylella</taxon>
    </lineage>
</organism>
<proteinExistence type="inferred from homology"/>
<gene>
    <name evidence="1" type="primary">eno</name>
    <name type="ordered locus">PD_0543</name>
</gene>
<name>ENO_XYLFT</name>
<comment type="function">
    <text evidence="1">Catalyzes the reversible conversion of 2-phosphoglycerate (2-PG) into phosphoenolpyruvate (PEP). It is essential for the degradation of carbohydrates via glycolysis.</text>
</comment>
<comment type="catalytic activity">
    <reaction evidence="1">
        <text>(2R)-2-phosphoglycerate = phosphoenolpyruvate + H2O</text>
        <dbReference type="Rhea" id="RHEA:10164"/>
        <dbReference type="ChEBI" id="CHEBI:15377"/>
        <dbReference type="ChEBI" id="CHEBI:58289"/>
        <dbReference type="ChEBI" id="CHEBI:58702"/>
        <dbReference type="EC" id="4.2.1.11"/>
    </reaction>
</comment>
<comment type="cofactor">
    <cofactor evidence="1">
        <name>Mg(2+)</name>
        <dbReference type="ChEBI" id="CHEBI:18420"/>
    </cofactor>
    <text evidence="1">Binds a second Mg(2+) ion via substrate during catalysis.</text>
</comment>
<comment type="pathway">
    <text evidence="1">Carbohydrate degradation; glycolysis; pyruvate from D-glyceraldehyde 3-phosphate: step 4/5.</text>
</comment>
<comment type="subunit">
    <text evidence="1">Component of the RNA degradosome, a multiprotein complex involved in RNA processing and mRNA degradation.</text>
</comment>
<comment type="subcellular location">
    <subcellularLocation>
        <location evidence="1">Cytoplasm</location>
    </subcellularLocation>
    <subcellularLocation>
        <location evidence="1">Secreted</location>
    </subcellularLocation>
    <subcellularLocation>
        <location evidence="1">Cell surface</location>
    </subcellularLocation>
    <text evidence="1">Fractions of enolase are present in both the cytoplasm and on the cell surface.</text>
</comment>
<comment type="similarity">
    <text evidence="1">Belongs to the enolase family.</text>
</comment>
<protein>
    <recommendedName>
        <fullName evidence="1">Enolase</fullName>
        <ecNumber evidence="1">4.2.1.11</ecNumber>
    </recommendedName>
    <alternativeName>
        <fullName evidence="1">2-phospho-D-glycerate hydro-lyase</fullName>
    </alternativeName>
    <alternativeName>
        <fullName evidence="1">2-phosphoglycerate dehydratase</fullName>
    </alternativeName>
</protein>
<reference key="1">
    <citation type="journal article" date="2003" name="J. Bacteriol.">
        <title>Comparative analyses of the complete genome sequences of Pierce's disease and citrus variegated chlorosis strains of Xylella fastidiosa.</title>
        <authorList>
            <person name="Van Sluys M.A."/>
            <person name="de Oliveira M.C."/>
            <person name="Monteiro-Vitorello C.B."/>
            <person name="Miyaki C.Y."/>
            <person name="Furlan L.R."/>
            <person name="Camargo L.E.A."/>
            <person name="da Silva A.C.R."/>
            <person name="Moon D.H."/>
            <person name="Takita M.A."/>
            <person name="Lemos E.G.M."/>
            <person name="Machado M.A."/>
            <person name="Ferro M.I.T."/>
            <person name="da Silva F.R."/>
            <person name="Goldman M.H.S."/>
            <person name="Goldman G.H."/>
            <person name="Lemos M.V.F."/>
            <person name="El-Dorry H."/>
            <person name="Tsai S.M."/>
            <person name="Carrer H."/>
            <person name="Carraro D.M."/>
            <person name="de Oliveira R.C."/>
            <person name="Nunes L.R."/>
            <person name="Siqueira W.J."/>
            <person name="Coutinho L.L."/>
            <person name="Kimura E.T."/>
            <person name="Ferro E.S."/>
            <person name="Harakava R."/>
            <person name="Kuramae E.E."/>
            <person name="Marino C.L."/>
            <person name="Giglioti E."/>
            <person name="Abreu I.L."/>
            <person name="Alves L.M.C."/>
            <person name="do Amaral A.M."/>
            <person name="Baia G.S."/>
            <person name="Blanco S.R."/>
            <person name="Brito M.S."/>
            <person name="Cannavan F.S."/>
            <person name="Celestino A.V."/>
            <person name="da Cunha A.F."/>
            <person name="Fenille R.C."/>
            <person name="Ferro J.A."/>
            <person name="Formighieri E.F."/>
            <person name="Kishi L.T."/>
            <person name="Leoni S.G."/>
            <person name="Oliveira A.R."/>
            <person name="Rosa V.E. Jr."/>
            <person name="Sassaki F.T."/>
            <person name="Sena J.A.D."/>
            <person name="de Souza A.A."/>
            <person name="Truffi D."/>
            <person name="Tsukumo F."/>
            <person name="Yanai G.M."/>
            <person name="Zaros L.G."/>
            <person name="Civerolo E.L."/>
            <person name="Simpson A.J.G."/>
            <person name="Almeida N.F. Jr."/>
            <person name="Setubal J.C."/>
            <person name="Kitajima J.P."/>
        </authorList>
    </citation>
    <scope>NUCLEOTIDE SEQUENCE [LARGE SCALE GENOMIC DNA]</scope>
    <source>
        <strain>Temecula1 / ATCC 700964</strain>
    </source>
</reference>